<organism>
    <name type="scientific">Corynebacterium glutamicum (strain R)</name>
    <dbReference type="NCBI Taxonomy" id="340322"/>
    <lineage>
        <taxon>Bacteria</taxon>
        <taxon>Bacillati</taxon>
        <taxon>Actinomycetota</taxon>
        <taxon>Actinomycetes</taxon>
        <taxon>Mycobacteriales</taxon>
        <taxon>Corynebacteriaceae</taxon>
        <taxon>Corynebacterium</taxon>
    </lineage>
</organism>
<protein>
    <recommendedName>
        <fullName evidence="1">Isopentenyl-diphosphate Delta-isomerase</fullName>
        <shortName evidence="1">IPP isomerase</shortName>
        <ecNumber evidence="1">5.3.3.2</ecNumber>
    </recommendedName>
    <alternativeName>
        <fullName evidence="1">IPP:DMAPP isomerase</fullName>
    </alternativeName>
    <alternativeName>
        <fullName evidence="1">Isopentenyl pyrophosphate isomerase</fullName>
    </alternativeName>
</protein>
<evidence type="ECO:0000255" key="1">
    <source>
        <dbReference type="HAMAP-Rule" id="MF_00202"/>
    </source>
</evidence>
<evidence type="ECO:0000305" key="2"/>
<comment type="function">
    <text evidence="1">Catalyzes the 1,3-allylic rearrangement of the homoallylic substrate isopentenyl (IPP) to its highly electrophilic allylic isomer, dimethylallyl diphosphate (DMAPP).</text>
</comment>
<comment type="catalytic activity">
    <reaction evidence="1">
        <text>isopentenyl diphosphate = dimethylallyl diphosphate</text>
        <dbReference type="Rhea" id="RHEA:23284"/>
        <dbReference type="ChEBI" id="CHEBI:57623"/>
        <dbReference type="ChEBI" id="CHEBI:128769"/>
        <dbReference type="EC" id="5.3.3.2"/>
    </reaction>
</comment>
<comment type="cofactor">
    <cofactor evidence="1">
        <name>Mg(2+)</name>
        <dbReference type="ChEBI" id="CHEBI:18420"/>
    </cofactor>
    <text evidence="1">Binds 1 Mg(2+) ion per subunit. The magnesium ion binds only when substrate is bound.</text>
</comment>
<comment type="cofactor">
    <cofactor evidence="1">
        <name>Mn(2+)</name>
        <dbReference type="ChEBI" id="CHEBI:29035"/>
    </cofactor>
    <text evidence="1">Binds 1 Mn(2+) ion per subunit.</text>
</comment>
<comment type="pathway">
    <text evidence="1">Isoprenoid biosynthesis; dimethylallyl diphosphate biosynthesis; dimethylallyl diphosphate from isopentenyl diphosphate: step 1/1.</text>
</comment>
<comment type="subcellular location">
    <subcellularLocation>
        <location evidence="1">Cytoplasm</location>
    </subcellularLocation>
</comment>
<comment type="similarity">
    <text evidence="1">Belongs to the IPP isomerase type 1 family.</text>
</comment>
<comment type="sequence caution" evidence="2">
    <conflict type="erroneous initiation">
        <sequence resource="EMBL-CDS" id="BAF55179"/>
    </conflict>
</comment>
<sequence length="189" mass="21099">MTTEVELVVLADSEGNAIGTAPKATVHTKDTPLHFAFSTYILNPRGELLVTRRALSKKTWPGVWTNSMCGHPGPDETNADAIRRRGVDELGLEVDSFLDIQEVLPDYQYRAVDASGIVEWELCPVHLVRLAVGEFVEPLDDEVEEFEWAEPQKLFDAVDATPFVFSPWMVDQLSAPELRQAILEAFDAE</sequence>
<feature type="chain" id="PRO_0000325213" description="Isopentenyl-diphosphate Delta-isomerase">
    <location>
        <begin position="1"/>
        <end position="189"/>
    </location>
</feature>
<feature type="domain" description="Nudix hydrolase">
    <location>
        <begin position="32"/>
        <end position="171"/>
    </location>
</feature>
<feature type="active site" evidence="1">
    <location>
        <position position="69"/>
    </location>
</feature>
<feature type="active site" evidence="1">
    <location>
        <position position="121"/>
    </location>
</feature>
<feature type="binding site" evidence="1">
    <location>
        <position position="27"/>
    </location>
    <ligand>
        <name>Mn(2+)</name>
        <dbReference type="ChEBI" id="CHEBI:29035"/>
    </ligand>
</feature>
<feature type="binding site" evidence="1">
    <location>
        <position position="34"/>
    </location>
    <ligand>
        <name>Mn(2+)</name>
        <dbReference type="ChEBI" id="CHEBI:29035"/>
    </ligand>
</feature>
<feature type="binding site" evidence="1">
    <location>
        <position position="71"/>
    </location>
    <ligand>
        <name>Mn(2+)</name>
        <dbReference type="ChEBI" id="CHEBI:29035"/>
    </ligand>
</feature>
<feature type="binding site" evidence="1">
    <location>
        <position position="89"/>
    </location>
    <ligand>
        <name>Mg(2+)</name>
        <dbReference type="ChEBI" id="CHEBI:18420"/>
    </ligand>
</feature>
<feature type="binding site" evidence="1">
    <location>
        <position position="119"/>
    </location>
    <ligand>
        <name>Mn(2+)</name>
        <dbReference type="ChEBI" id="CHEBI:29035"/>
    </ligand>
</feature>
<feature type="binding site" evidence="1">
    <location>
        <position position="121"/>
    </location>
    <ligand>
        <name>Mn(2+)</name>
        <dbReference type="ChEBI" id="CHEBI:29035"/>
    </ligand>
</feature>
<accession>A4QG13</accession>
<name>IDI_CORGB</name>
<gene>
    <name evidence="1" type="primary">idi</name>
    <name type="ordered locus">cgR_2177</name>
</gene>
<reference key="1">
    <citation type="journal article" date="2007" name="Microbiology">
        <title>Comparative analysis of the Corynebacterium glutamicum group and complete genome sequence of strain R.</title>
        <authorList>
            <person name="Yukawa H."/>
            <person name="Omumasaba C.A."/>
            <person name="Nonaka H."/>
            <person name="Kos P."/>
            <person name="Okai N."/>
            <person name="Suzuki N."/>
            <person name="Suda M."/>
            <person name="Tsuge Y."/>
            <person name="Watanabe J."/>
            <person name="Ikeda Y."/>
            <person name="Vertes A.A."/>
            <person name="Inui M."/>
        </authorList>
    </citation>
    <scope>NUCLEOTIDE SEQUENCE [LARGE SCALE GENOMIC DNA]</scope>
    <source>
        <strain>R</strain>
    </source>
</reference>
<proteinExistence type="inferred from homology"/>
<dbReference type="EC" id="5.3.3.2" evidence="1"/>
<dbReference type="EMBL" id="AP009044">
    <property type="protein sequence ID" value="BAF55179.1"/>
    <property type="status" value="ALT_INIT"/>
    <property type="molecule type" value="Genomic_DNA"/>
</dbReference>
<dbReference type="RefSeq" id="WP_004567773.1">
    <property type="nucleotide sequence ID" value="NC_009342.1"/>
</dbReference>
<dbReference type="SMR" id="A4QG13"/>
<dbReference type="KEGG" id="cgt:cgR_2177"/>
<dbReference type="HOGENOM" id="CLU_060552_2_0_11"/>
<dbReference type="PhylomeDB" id="A4QG13"/>
<dbReference type="UniPathway" id="UPA00059">
    <property type="reaction ID" value="UER00104"/>
</dbReference>
<dbReference type="Proteomes" id="UP000006698">
    <property type="component" value="Chromosome"/>
</dbReference>
<dbReference type="GO" id="GO:0005737">
    <property type="term" value="C:cytoplasm"/>
    <property type="evidence" value="ECO:0007669"/>
    <property type="project" value="UniProtKB-SubCell"/>
</dbReference>
<dbReference type="GO" id="GO:0004452">
    <property type="term" value="F:isopentenyl-diphosphate delta-isomerase activity"/>
    <property type="evidence" value="ECO:0007669"/>
    <property type="project" value="UniProtKB-UniRule"/>
</dbReference>
<dbReference type="GO" id="GO:0046872">
    <property type="term" value="F:metal ion binding"/>
    <property type="evidence" value="ECO:0007669"/>
    <property type="project" value="UniProtKB-KW"/>
</dbReference>
<dbReference type="GO" id="GO:0050992">
    <property type="term" value="P:dimethylallyl diphosphate biosynthetic process"/>
    <property type="evidence" value="ECO:0007669"/>
    <property type="project" value="UniProtKB-UniRule"/>
</dbReference>
<dbReference type="GO" id="GO:0008299">
    <property type="term" value="P:isoprenoid biosynthetic process"/>
    <property type="evidence" value="ECO:0007669"/>
    <property type="project" value="UniProtKB-KW"/>
</dbReference>
<dbReference type="CDD" id="cd02885">
    <property type="entry name" value="NUDIX_IPP_Isomerase"/>
    <property type="match status" value="1"/>
</dbReference>
<dbReference type="Gene3D" id="3.90.79.10">
    <property type="entry name" value="Nucleoside Triphosphate Pyrophosphohydrolase"/>
    <property type="match status" value="1"/>
</dbReference>
<dbReference type="HAMAP" id="MF_00202">
    <property type="entry name" value="Idi"/>
    <property type="match status" value="1"/>
</dbReference>
<dbReference type="InterPro" id="IPR056375">
    <property type="entry name" value="Idi_bact"/>
</dbReference>
<dbReference type="InterPro" id="IPR011876">
    <property type="entry name" value="IsopentenylPP_isomerase_typ1"/>
</dbReference>
<dbReference type="InterPro" id="IPR015797">
    <property type="entry name" value="NUDIX_hydrolase-like_dom_sf"/>
</dbReference>
<dbReference type="InterPro" id="IPR000086">
    <property type="entry name" value="NUDIX_hydrolase_dom"/>
</dbReference>
<dbReference type="NCBIfam" id="TIGR02150">
    <property type="entry name" value="IPP_isom_1"/>
    <property type="match status" value="1"/>
</dbReference>
<dbReference type="NCBIfam" id="NF002995">
    <property type="entry name" value="PRK03759.1"/>
    <property type="match status" value="1"/>
</dbReference>
<dbReference type="PANTHER" id="PTHR10885">
    <property type="entry name" value="ISOPENTENYL-DIPHOSPHATE DELTA-ISOMERASE"/>
    <property type="match status" value="1"/>
</dbReference>
<dbReference type="PANTHER" id="PTHR10885:SF0">
    <property type="entry name" value="ISOPENTENYL-DIPHOSPHATE DELTA-ISOMERASE"/>
    <property type="match status" value="1"/>
</dbReference>
<dbReference type="Pfam" id="PF00293">
    <property type="entry name" value="NUDIX"/>
    <property type="match status" value="1"/>
</dbReference>
<dbReference type="PIRSF" id="PIRSF018427">
    <property type="entry name" value="Isopntndiph_ism"/>
    <property type="match status" value="1"/>
</dbReference>
<dbReference type="SUPFAM" id="SSF55811">
    <property type="entry name" value="Nudix"/>
    <property type="match status" value="1"/>
</dbReference>
<dbReference type="PROSITE" id="PS51462">
    <property type="entry name" value="NUDIX"/>
    <property type="match status" value="1"/>
</dbReference>
<keyword id="KW-0963">Cytoplasm</keyword>
<keyword id="KW-0413">Isomerase</keyword>
<keyword id="KW-0414">Isoprene biosynthesis</keyword>
<keyword id="KW-0460">Magnesium</keyword>
<keyword id="KW-0464">Manganese</keyword>
<keyword id="KW-0479">Metal-binding</keyword>